<feature type="chain" id="PRO_1000017598" description="Large ribosomal subunit protein bL27">
    <location>
        <begin position="1"/>
        <end position="84"/>
    </location>
</feature>
<feature type="region of interest" description="Disordered" evidence="2">
    <location>
        <begin position="1"/>
        <end position="22"/>
    </location>
</feature>
<proteinExistence type="inferred from homology"/>
<reference key="1">
    <citation type="submission" date="2007-07" db="EMBL/GenBank/DDBJ databases">
        <title>Complete sequence of chromosome of Shewanella baltica OS185.</title>
        <authorList>
            <consortium name="US DOE Joint Genome Institute"/>
            <person name="Copeland A."/>
            <person name="Lucas S."/>
            <person name="Lapidus A."/>
            <person name="Barry K."/>
            <person name="Glavina del Rio T."/>
            <person name="Dalin E."/>
            <person name="Tice H."/>
            <person name="Pitluck S."/>
            <person name="Sims D."/>
            <person name="Brettin T."/>
            <person name="Bruce D."/>
            <person name="Detter J.C."/>
            <person name="Han C."/>
            <person name="Schmutz J."/>
            <person name="Larimer F."/>
            <person name="Land M."/>
            <person name="Hauser L."/>
            <person name="Kyrpides N."/>
            <person name="Mikhailova N."/>
            <person name="Brettar I."/>
            <person name="Rodrigues J."/>
            <person name="Konstantinidis K."/>
            <person name="Tiedje J."/>
            <person name="Richardson P."/>
        </authorList>
    </citation>
    <scope>NUCLEOTIDE SEQUENCE [LARGE SCALE GENOMIC DNA]</scope>
    <source>
        <strain>OS185</strain>
    </source>
</reference>
<evidence type="ECO:0000255" key="1">
    <source>
        <dbReference type="HAMAP-Rule" id="MF_00539"/>
    </source>
</evidence>
<evidence type="ECO:0000256" key="2">
    <source>
        <dbReference type="SAM" id="MobiDB-lite"/>
    </source>
</evidence>
<evidence type="ECO:0000305" key="3"/>
<accession>A6WK50</accession>
<comment type="similarity">
    <text evidence="1">Belongs to the bacterial ribosomal protein bL27 family.</text>
</comment>
<dbReference type="EMBL" id="CP000753">
    <property type="protein sequence ID" value="ABS07189.1"/>
    <property type="molecule type" value="Genomic_DNA"/>
</dbReference>
<dbReference type="RefSeq" id="WP_006080527.1">
    <property type="nucleotide sequence ID" value="NC_009665.1"/>
</dbReference>
<dbReference type="SMR" id="A6WK50"/>
<dbReference type="GeneID" id="11771357"/>
<dbReference type="KEGG" id="sbm:Shew185_1037"/>
<dbReference type="HOGENOM" id="CLU_095424_4_1_6"/>
<dbReference type="GO" id="GO:0022625">
    <property type="term" value="C:cytosolic large ribosomal subunit"/>
    <property type="evidence" value="ECO:0007669"/>
    <property type="project" value="TreeGrafter"/>
</dbReference>
<dbReference type="GO" id="GO:0003735">
    <property type="term" value="F:structural constituent of ribosome"/>
    <property type="evidence" value="ECO:0007669"/>
    <property type="project" value="InterPro"/>
</dbReference>
<dbReference type="GO" id="GO:0006412">
    <property type="term" value="P:translation"/>
    <property type="evidence" value="ECO:0007669"/>
    <property type="project" value="UniProtKB-UniRule"/>
</dbReference>
<dbReference type="FunFam" id="2.40.50.100:FF:000001">
    <property type="entry name" value="50S ribosomal protein L27"/>
    <property type="match status" value="1"/>
</dbReference>
<dbReference type="Gene3D" id="2.40.50.100">
    <property type="match status" value="1"/>
</dbReference>
<dbReference type="HAMAP" id="MF_00539">
    <property type="entry name" value="Ribosomal_bL27"/>
    <property type="match status" value="1"/>
</dbReference>
<dbReference type="InterPro" id="IPR001684">
    <property type="entry name" value="Ribosomal_bL27"/>
</dbReference>
<dbReference type="InterPro" id="IPR018261">
    <property type="entry name" value="Ribosomal_bL27_CS"/>
</dbReference>
<dbReference type="NCBIfam" id="TIGR00062">
    <property type="entry name" value="L27"/>
    <property type="match status" value="1"/>
</dbReference>
<dbReference type="PANTHER" id="PTHR15893:SF0">
    <property type="entry name" value="LARGE RIBOSOMAL SUBUNIT PROTEIN BL27M"/>
    <property type="match status" value="1"/>
</dbReference>
<dbReference type="PANTHER" id="PTHR15893">
    <property type="entry name" value="RIBOSOMAL PROTEIN L27"/>
    <property type="match status" value="1"/>
</dbReference>
<dbReference type="Pfam" id="PF01016">
    <property type="entry name" value="Ribosomal_L27"/>
    <property type="match status" value="1"/>
</dbReference>
<dbReference type="PRINTS" id="PR00063">
    <property type="entry name" value="RIBOSOMALL27"/>
</dbReference>
<dbReference type="SUPFAM" id="SSF110324">
    <property type="entry name" value="Ribosomal L27 protein-like"/>
    <property type="match status" value="1"/>
</dbReference>
<dbReference type="PROSITE" id="PS00831">
    <property type="entry name" value="RIBOSOMAL_L27"/>
    <property type="match status" value="1"/>
</dbReference>
<sequence length="84" mass="9051">MAHKKAGGSTRNGRDSESKRLGVKRFGGESVLAGNIIVRQRGTKFHAGVNVGIGRDHTLFALTDGKVKFEVKGANNRKFISIEA</sequence>
<keyword id="KW-0687">Ribonucleoprotein</keyword>
<keyword id="KW-0689">Ribosomal protein</keyword>
<gene>
    <name evidence="1" type="primary">rpmA</name>
    <name type="ordered locus">Shew185_1037</name>
</gene>
<organism>
    <name type="scientific">Shewanella baltica (strain OS185)</name>
    <dbReference type="NCBI Taxonomy" id="402882"/>
    <lineage>
        <taxon>Bacteria</taxon>
        <taxon>Pseudomonadati</taxon>
        <taxon>Pseudomonadota</taxon>
        <taxon>Gammaproteobacteria</taxon>
        <taxon>Alteromonadales</taxon>
        <taxon>Shewanellaceae</taxon>
        <taxon>Shewanella</taxon>
    </lineage>
</organism>
<name>RL27_SHEB8</name>
<protein>
    <recommendedName>
        <fullName evidence="1">Large ribosomal subunit protein bL27</fullName>
    </recommendedName>
    <alternativeName>
        <fullName evidence="3">50S ribosomal protein L27</fullName>
    </alternativeName>
</protein>